<sequence>MSLTNEQIVDAIAEKSLMEVMELVKAIEEKFGVSAAAPVAAAAAGPAAVVEEQTEFNVVLTNCGTNKVGVIKAVRAVTGLGLKEAKDLTEAGGMLKEGASKDEAEKIKKELTEAGATVEIK</sequence>
<evidence type="ECO:0000255" key="1">
    <source>
        <dbReference type="HAMAP-Rule" id="MF_00368"/>
    </source>
</evidence>
<evidence type="ECO:0000305" key="2"/>
<organism>
    <name type="scientific">Xanthomonas axonopodis pv. citri (strain 306)</name>
    <dbReference type="NCBI Taxonomy" id="190486"/>
    <lineage>
        <taxon>Bacteria</taxon>
        <taxon>Pseudomonadati</taxon>
        <taxon>Pseudomonadota</taxon>
        <taxon>Gammaproteobacteria</taxon>
        <taxon>Lysobacterales</taxon>
        <taxon>Lysobacteraceae</taxon>
        <taxon>Xanthomonas</taxon>
    </lineage>
</organism>
<dbReference type="EMBL" id="AE008923">
    <property type="protein sequence ID" value="AAM35847.1"/>
    <property type="molecule type" value="Genomic_DNA"/>
</dbReference>
<dbReference type="RefSeq" id="WP_003486742.1">
    <property type="nucleotide sequence ID" value="NC_003919.1"/>
</dbReference>
<dbReference type="SMR" id="Q8PNT1"/>
<dbReference type="GeneID" id="66910150"/>
<dbReference type="KEGG" id="xac:XAC0964"/>
<dbReference type="eggNOG" id="COG0222">
    <property type="taxonomic scope" value="Bacteria"/>
</dbReference>
<dbReference type="HOGENOM" id="CLU_086499_3_2_6"/>
<dbReference type="Proteomes" id="UP000000576">
    <property type="component" value="Chromosome"/>
</dbReference>
<dbReference type="GO" id="GO:0022625">
    <property type="term" value="C:cytosolic large ribosomal subunit"/>
    <property type="evidence" value="ECO:0007669"/>
    <property type="project" value="TreeGrafter"/>
</dbReference>
<dbReference type="GO" id="GO:0003729">
    <property type="term" value="F:mRNA binding"/>
    <property type="evidence" value="ECO:0007669"/>
    <property type="project" value="TreeGrafter"/>
</dbReference>
<dbReference type="GO" id="GO:0003735">
    <property type="term" value="F:structural constituent of ribosome"/>
    <property type="evidence" value="ECO:0007669"/>
    <property type="project" value="InterPro"/>
</dbReference>
<dbReference type="GO" id="GO:0006412">
    <property type="term" value="P:translation"/>
    <property type="evidence" value="ECO:0007669"/>
    <property type="project" value="UniProtKB-UniRule"/>
</dbReference>
<dbReference type="CDD" id="cd00387">
    <property type="entry name" value="Ribosomal_L7_L12"/>
    <property type="match status" value="1"/>
</dbReference>
<dbReference type="FunFam" id="1.20.5.710:FF:000003">
    <property type="entry name" value="50S ribosomal protein L7/L12"/>
    <property type="match status" value="1"/>
</dbReference>
<dbReference type="FunFam" id="3.30.1390.10:FF:000001">
    <property type="entry name" value="50S ribosomal protein L7/L12"/>
    <property type="match status" value="1"/>
</dbReference>
<dbReference type="Gene3D" id="3.30.1390.10">
    <property type="match status" value="1"/>
</dbReference>
<dbReference type="Gene3D" id="1.20.5.710">
    <property type="entry name" value="Single helix bin"/>
    <property type="match status" value="1"/>
</dbReference>
<dbReference type="HAMAP" id="MF_00368">
    <property type="entry name" value="Ribosomal_bL12"/>
    <property type="match status" value="1"/>
</dbReference>
<dbReference type="InterPro" id="IPR000206">
    <property type="entry name" value="Ribosomal_bL12"/>
</dbReference>
<dbReference type="InterPro" id="IPR013823">
    <property type="entry name" value="Ribosomal_bL12_C"/>
</dbReference>
<dbReference type="InterPro" id="IPR014719">
    <property type="entry name" value="Ribosomal_bL12_C/ClpS-like"/>
</dbReference>
<dbReference type="InterPro" id="IPR008932">
    <property type="entry name" value="Ribosomal_bL12_oligo"/>
</dbReference>
<dbReference type="InterPro" id="IPR036235">
    <property type="entry name" value="Ribosomal_bL12_oligo_N_sf"/>
</dbReference>
<dbReference type="NCBIfam" id="TIGR00855">
    <property type="entry name" value="L12"/>
    <property type="match status" value="1"/>
</dbReference>
<dbReference type="PANTHER" id="PTHR45987">
    <property type="entry name" value="39S RIBOSOMAL PROTEIN L12"/>
    <property type="match status" value="1"/>
</dbReference>
<dbReference type="PANTHER" id="PTHR45987:SF4">
    <property type="entry name" value="LARGE RIBOSOMAL SUBUNIT PROTEIN BL12M"/>
    <property type="match status" value="1"/>
</dbReference>
<dbReference type="Pfam" id="PF00542">
    <property type="entry name" value="Ribosomal_L12"/>
    <property type="match status" value="1"/>
</dbReference>
<dbReference type="Pfam" id="PF16320">
    <property type="entry name" value="Ribosomal_L12_N"/>
    <property type="match status" value="1"/>
</dbReference>
<dbReference type="SUPFAM" id="SSF54736">
    <property type="entry name" value="ClpS-like"/>
    <property type="match status" value="1"/>
</dbReference>
<dbReference type="SUPFAM" id="SSF48300">
    <property type="entry name" value="Ribosomal protein L7/12, oligomerisation (N-terminal) domain"/>
    <property type="match status" value="1"/>
</dbReference>
<gene>
    <name evidence="1" type="primary">rplL</name>
    <name type="ordered locus">XAC0964</name>
</gene>
<proteinExistence type="inferred from homology"/>
<feature type="chain" id="PRO_0000157607" description="Large ribosomal subunit protein bL12">
    <location>
        <begin position="1"/>
        <end position="121"/>
    </location>
</feature>
<accession>Q8PNT1</accession>
<keyword id="KW-0687">Ribonucleoprotein</keyword>
<keyword id="KW-0689">Ribosomal protein</keyword>
<name>RL7_XANAC</name>
<comment type="function">
    <text evidence="1">Forms part of the ribosomal stalk which helps the ribosome interact with GTP-bound translation factors. Is thus essential for accurate translation.</text>
</comment>
<comment type="subunit">
    <text evidence="1">Homodimer. Part of the ribosomal stalk of the 50S ribosomal subunit. Forms a multimeric L10(L12)X complex, where L10 forms an elongated spine to which 2 to 4 L12 dimers bind in a sequential fashion. Binds GTP-bound translation factors.</text>
</comment>
<comment type="similarity">
    <text evidence="1">Belongs to the bacterial ribosomal protein bL12 family.</text>
</comment>
<reference key="1">
    <citation type="journal article" date="2002" name="Nature">
        <title>Comparison of the genomes of two Xanthomonas pathogens with differing host specificities.</title>
        <authorList>
            <person name="da Silva A.C.R."/>
            <person name="Ferro J.A."/>
            <person name="Reinach F.C."/>
            <person name="Farah C.S."/>
            <person name="Furlan L.R."/>
            <person name="Quaggio R.B."/>
            <person name="Monteiro-Vitorello C.B."/>
            <person name="Van Sluys M.A."/>
            <person name="Almeida N.F. Jr."/>
            <person name="Alves L.M.C."/>
            <person name="do Amaral A.M."/>
            <person name="Bertolini M.C."/>
            <person name="Camargo L.E.A."/>
            <person name="Camarotte G."/>
            <person name="Cannavan F."/>
            <person name="Cardozo J."/>
            <person name="Chambergo F."/>
            <person name="Ciapina L.P."/>
            <person name="Cicarelli R.M.B."/>
            <person name="Coutinho L.L."/>
            <person name="Cursino-Santos J.R."/>
            <person name="El-Dorry H."/>
            <person name="Faria J.B."/>
            <person name="Ferreira A.J.S."/>
            <person name="Ferreira R.C.C."/>
            <person name="Ferro M.I.T."/>
            <person name="Formighieri E.F."/>
            <person name="Franco M.C."/>
            <person name="Greggio C.C."/>
            <person name="Gruber A."/>
            <person name="Katsuyama A.M."/>
            <person name="Kishi L.T."/>
            <person name="Leite R.P."/>
            <person name="Lemos E.G.M."/>
            <person name="Lemos M.V.F."/>
            <person name="Locali E.C."/>
            <person name="Machado M.A."/>
            <person name="Madeira A.M.B.N."/>
            <person name="Martinez-Rossi N.M."/>
            <person name="Martins E.C."/>
            <person name="Meidanis J."/>
            <person name="Menck C.F.M."/>
            <person name="Miyaki C.Y."/>
            <person name="Moon D.H."/>
            <person name="Moreira L.M."/>
            <person name="Novo M.T.M."/>
            <person name="Okura V.K."/>
            <person name="Oliveira M.C."/>
            <person name="Oliveira V.R."/>
            <person name="Pereira H.A."/>
            <person name="Rossi A."/>
            <person name="Sena J.A.D."/>
            <person name="Silva C."/>
            <person name="de Souza R.F."/>
            <person name="Spinola L.A.F."/>
            <person name="Takita M.A."/>
            <person name="Tamura R.E."/>
            <person name="Teixeira E.C."/>
            <person name="Tezza R.I.D."/>
            <person name="Trindade dos Santos M."/>
            <person name="Truffi D."/>
            <person name="Tsai S.M."/>
            <person name="White F.F."/>
            <person name="Setubal J.C."/>
            <person name="Kitajima J.P."/>
        </authorList>
    </citation>
    <scope>NUCLEOTIDE SEQUENCE [LARGE SCALE GENOMIC DNA]</scope>
    <source>
        <strain>306</strain>
    </source>
</reference>
<protein>
    <recommendedName>
        <fullName evidence="1">Large ribosomal subunit protein bL12</fullName>
    </recommendedName>
    <alternativeName>
        <fullName evidence="2">50S ribosomal protein L7/L12</fullName>
    </alternativeName>
</protein>